<name>MMM12_YARLI</name>
<keyword id="KW-0256">Endoplasmic reticulum</keyword>
<keyword id="KW-0445">Lipid transport</keyword>
<keyword id="KW-0446">Lipid-binding</keyword>
<keyword id="KW-0472">Membrane</keyword>
<keyword id="KW-1185">Reference proteome</keyword>
<keyword id="KW-0812">Transmembrane</keyword>
<keyword id="KW-1133">Transmembrane helix</keyword>
<keyword id="KW-0813">Transport</keyword>
<gene>
    <name evidence="1" type="primary">MMM1-2</name>
    <name type="ordered locus">YALI0D06886g</name>
</gene>
<reference key="1">
    <citation type="journal article" date="2004" name="Nature">
        <title>Genome evolution in yeasts.</title>
        <authorList>
            <person name="Dujon B."/>
            <person name="Sherman D."/>
            <person name="Fischer G."/>
            <person name="Durrens P."/>
            <person name="Casaregola S."/>
            <person name="Lafontaine I."/>
            <person name="de Montigny J."/>
            <person name="Marck C."/>
            <person name="Neuveglise C."/>
            <person name="Talla E."/>
            <person name="Goffard N."/>
            <person name="Frangeul L."/>
            <person name="Aigle M."/>
            <person name="Anthouard V."/>
            <person name="Babour A."/>
            <person name="Barbe V."/>
            <person name="Barnay S."/>
            <person name="Blanchin S."/>
            <person name="Beckerich J.-M."/>
            <person name="Beyne E."/>
            <person name="Bleykasten C."/>
            <person name="Boisrame A."/>
            <person name="Boyer J."/>
            <person name="Cattolico L."/>
            <person name="Confanioleri F."/>
            <person name="de Daruvar A."/>
            <person name="Despons L."/>
            <person name="Fabre E."/>
            <person name="Fairhead C."/>
            <person name="Ferry-Dumazet H."/>
            <person name="Groppi A."/>
            <person name="Hantraye F."/>
            <person name="Hennequin C."/>
            <person name="Jauniaux N."/>
            <person name="Joyet P."/>
            <person name="Kachouri R."/>
            <person name="Kerrest A."/>
            <person name="Koszul R."/>
            <person name="Lemaire M."/>
            <person name="Lesur I."/>
            <person name="Ma L."/>
            <person name="Muller H."/>
            <person name="Nicaud J.-M."/>
            <person name="Nikolski M."/>
            <person name="Oztas S."/>
            <person name="Ozier-Kalogeropoulos O."/>
            <person name="Pellenz S."/>
            <person name="Potier S."/>
            <person name="Richard G.-F."/>
            <person name="Straub M.-L."/>
            <person name="Suleau A."/>
            <person name="Swennen D."/>
            <person name="Tekaia F."/>
            <person name="Wesolowski-Louvel M."/>
            <person name="Westhof E."/>
            <person name="Wirth B."/>
            <person name="Zeniou-Meyer M."/>
            <person name="Zivanovic Y."/>
            <person name="Bolotin-Fukuhara M."/>
            <person name="Thierry A."/>
            <person name="Bouchier C."/>
            <person name="Caudron B."/>
            <person name="Scarpelli C."/>
            <person name="Gaillardin C."/>
            <person name="Weissenbach J."/>
            <person name="Wincker P."/>
            <person name="Souciet J.-L."/>
        </authorList>
    </citation>
    <scope>NUCLEOTIDE SEQUENCE [LARGE SCALE GENOMIC DNA]</scope>
    <source>
        <strain>CLIB 122 / E 150</strain>
    </source>
</reference>
<accession>Q6CA06</accession>
<evidence type="ECO:0000255" key="1">
    <source>
        <dbReference type="HAMAP-Rule" id="MF_03103"/>
    </source>
</evidence>
<evidence type="ECO:0000256" key="2">
    <source>
        <dbReference type="SAM" id="MobiDB-lite"/>
    </source>
</evidence>
<sequence>MVIPAELIQKALKQQSGWGFTEGLVLGQLSVIITVIIILKFVIFAENKSPKKGNDMTAVSAKDKEAEHVAMGGQTANGVKTSGVRRNKSSTNLRNRLATGAAGASISRPGSSRVSMVRSTSGAVPVLGQNGGATPRGMAGSSVAGSTSNLAVPVPTTPTIAEGIEPENDSTLQDDSAIIDLDLDLDLSPVDEILHKTCYQLSSHAPESLDWFNVLVAQIITQLRFDAKANNNLNLLNSLDAAFNSKRPDFIDRINVTEINLGDDYPILSNCKITHKGTGPAGSGAASGNNMPNNAEYDDSRLEAQMDIDLSDTITLGIETRLNLNQPKILSPFLSLSTSLPVSLSVTIVRFTARLNISLYQQIEQTEEDEKDKRDTILSINFEPDYKLQLSVKSLVGSRSRLQNVPTLESLVDSKIQKWFRDHYVEPHQMIFILPSLWPRKKRSATAGAAGTATGADTASGSS</sequence>
<feature type="chain" id="PRO_0000384260" description="Maintenance of mitochondrial morphology protein 1-2">
    <location>
        <begin position="1"/>
        <end position="463"/>
    </location>
</feature>
<feature type="topological domain" description="Lumenal" evidence="1">
    <location>
        <begin position="1"/>
        <end position="23"/>
    </location>
</feature>
<feature type="transmembrane region" description="Helical" evidence="1">
    <location>
        <begin position="24"/>
        <end position="44"/>
    </location>
</feature>
<feature type="topological domain" description="Cytoplasmic" evidence="1">
    <location>
        <begin position="45"/>
        <end position="463"/>
    </location>
</feature>
<feature type="domain" description="SMP-LTD" evidence="1">
    <location>
        <begin position="205"/>
        <end position="435"/>
    </location>
</feature>
<feature type="region of interest" description="Disordered" evidence="2">
    <location>
        <begin position="72"/>
        <end position="152"/>
    </location>
</feature>
<feature type="compositionally biased region" description="Polar residues" evidence="2">
    <location>
        <begin position="108"/>
        <end position="122"/>
    </location>
</feature>
<dbReference type="EMBL" id="CR382130">
    <property type="protein sequence ID" value="CAG80694.1"/>
    <property type="molecule type" value="Genomic_DNA"/>
</dbReference>
<dbReference type="RefSeq" id="XP_502506.1">
    <property type="nucleotide sequence ID" value="XM_502506.1"/>
</dbReference>
<dbReference type="SMR" id="Q6CA06"/>
<dbReference type="STRING" id="284591.Q6CA06"/>
<dbReference type="EnsemblFungi" id="CAG80694">
    <property type="protein sequence ID" value="CAG80694"/>
    <property type="gene ID" value="YALI0_D06886g"/>
</dbReference>
<dbReference type="KEGG" id="yli:2910785"/>
<dbReference type="VEuPathDB" id="FungiDB:YALI0_D06886g"/>
<dbReference type="HOGENOM" id="CLU_032730_2_0_1"/>
<dbReference type="InParanoid" id="Q6CA06"/>
<dbReference type="OMA" id="SARQEMF"/>
<dbReference type="OrthoDB" id="121802at4891"/>
<dbReference type="Proteomes" id="UP000001300">
    <property type="component" value="Chromosome D"/>
</dbReference>
<dbReference type="GO" id="GO:0005783">
    <property type="term" value="C:endoplasmic reticulum"/>
    <property type="evidence" value="ECO:0000318"/>
    <property type="project" value="GO_Central"/>
</dbReference>
<dbReference type="GO" id="GO:0005789">
    <property type="term" value="C:endoplasmic reticulum membrane"/>
    <property type="evidence" value="ECO:0007669"/>
    <property type="project" value="UniProtKB-SubCell"/>
</dbReference>
<dbReference type="GO" id="GO:0032865">
    <property type="term" value="C:ERMES complex"/>
    <property type="evidence" value="ECO:0000318"/>
    <property type="project" value="GO_Central"/>
</dbReference>
<dbReference type="GO" id="GO:0008289">
    <property type="term" value="F:lipid binding"/>
    <property type="evidence" value="ECO:0000318"/>
    <property type="project" value="GO_Central"/>
</dbReference>
<dbReference type="GO" id="GO:0015917">
    <property type="term" value="P:aminophospholipid transport"/>
    <property type="evidence" value="ECO:0000318"/>
    <property type="project" value="GO_Central"/>
</dbReference>
<dbReference type="GO" id="GO:0120009">
    <property type="term" value="P:intermembrane lipid transfer"/>
    <property type="evidence" value="ECO:0007669"/>
    <property type="project" value="GOC"/>
</dbReference>
<dbReference type="GO" id="GO:0000002">
    <property type="term" value="P:mitochondrial genome maintenance"/>
    <property type="evidence" value="ECO:0007669"/>
    <property type="project" value="UniProtKB-UniRule"/>
</dbReference>
<dbReference type="GO" id="GO:1990456">
    <property type="term" value="P:mitochondrion-endoplasmic reticulum membrane tethering"/>
    <property type="evidence" value="ECO:0000318"/>
    <property type="project" value="GO_Central"/>
</dbReference>
<dbReference type="GO" id="GO:0045040">
    <property type="term" value="P:protein insertion into mitochondrial outer membrane"/>
    <property type="evidence" value="ECO:0007669"/>
    <property type="project" value="UniProtKB-UniRule"/>
</dbReference>
<dbReference type="CDD" id="cd21671">
    <property type="entry name" value="SMP_Mmm1"/>
    <property type="match status" value="1"/>
</dbReference>
<dbReference type="HAMAP" id="MF_03103">
    <property type="entry name" value="Mmm1"/>
    <property type="match status" value="1"/>
</dbReference>
<dbReference type="InterPro" id="IPR027537">
    <property type="entry name" value="Mmm1"/>
</dbReference>
<dbReference type="InterPro" id="IPR019411">
    <property type="entry name" value="MMM1_dom"/>
</dbReference>
<dbReference type="InterPro" id="IPR031468">
    <property type="entry name" value="SMP_LBD"/>
</dbReference>
<dbReference type="PANTHER" id="PTHR13466">
    <property type="entry name" value="TEX2 PROTEIN-RELATED"/>
    <property type="match status" value="1"/>
</dbReference>
<dbReference type="Pfam" id="PF10296">
    <property type="entry name" value="MMM1"/>
    <property type="match status" value="1"/>
</dbReference>
<dbReference type="PROSITE" id="PS51847">
    <property type="entry name" value="SMP"/>
    <property type="match status" value="1"/>
</dbReference>
<comment type="function">
    <text evidence="1">Component of the ERMES/MDM complex, which serves as a molecular tether to connect the endoplasmic reticulum (ER) and mitochondria. Components of this complex are involved in the control of mitochondrial shape and protein biogenesis, and function in nonvesicular lipid trafficking between the ER and mitochondria. The MDM12-MMM1 subcomplex functions in the major beta-barrel assembly pathway that is responsible for biogenesis of all outer membrane beta-barrel proteins, and acts in a late step after the SAM complex. The MDM10-MDM12-MMM1 subcomplex further acts in the TOM40-specific pathway after the action of the MDM12-MMM1 complex. Essential for establishing and maintaining the structure of mitochondria and maintenance of mtDNA nucleoids.</text>
</comment>
<comment type="subunit">
    <text evidence="1">Homodimer. Component of the ER-mitochondria encounter structure (ERMES) or MDM complex, composed of MMM1, MDM10, MDM12 and MDM34. A MMM1 homodimer associates with one molecule of MDM12 on each side in a pairwise head-to-tail manner, and the SMP-LTD domains of MMM1 and MDM12 generate a continuous hydrophobic tunnel for phospholipid trafficking.</text>
</comment>
<comment type="subcellular location">
    <subcellularLocation>
        <location evidence="1">Endoplasmic reticulum membrane</location>
        <topology evidence="1">Single-pass type I membrane protein</topology>
    </subcellularLocation>
    <text evidence="1">The ERMES/MDM complex localizes to a few discrete foci (around 10 per single cell), that represent mitochondria-endoplasmic reticulum junctions. These foci are often found next to mtDNA nucleoids.</text>
</comment>
<comment type="domain">
    <text evidence="1">The SMP-LTD domain is a barrel-like domain that can bind various types of glycerophospholipids in its interior and mediate their transfer between two adjacent bilayers.</text>
</comment>
<comment type="similarity">
    <text evidence="1">Belongs to the MMM1 family.</text>
</comment>
<proteinExistence type="inferred from homology"/>
<protein>
    <recommendedName>
        <fullName evidence="1">Maintenance of mitochondrial morphology protein 1-2</fullName>
    </recommendedName>
</protein>
<organism>
    <name type="scientific">Yarrowia lipolytica (strain CLIB 122 / E 150)</name>
    <name type="common">Yeast</name>
    <name type="synonym">Candida lipolytica</name>
    <dbReference type="NCBI Taxonomy" id="284591"/>
    <lineage>
        <taxon>Eukaryota</taxon>
        <taxon>Fungi</taxon>
        <taxon>Dikarya</taxon>
        <taxon>Ascomycota</taxon>
        <taxon>Saccharomycotina</taxon>
        <taxon>Dipodascomycetes</taxon>
        <taxon>Dipodascales</taxon>
        <taxon>Dipodascales incertae sedis</taxon>
        <taxon>Yarrowia</taxon>
    </lineage>
</organism>